<sequence>MNSIEFTLLARRTQNSVISTTSNDLSNWSRLSSLWPLLYGTSCCFIEFASLIGSRFDFDRYGLVPRSSPRQADLILTAGTVTMKMAPSLVRLYEQMPEPKYVIAMGACTITGGMFSTDSYSTVRGVDKLIPVDVYLPGCPPKPEAIIDAITKLRKKISREIYEDRIRSQEENRCFTTNHKFHVGPSMHTGNYDPGLLYQLPSTSEIASETFFKYKSSVSAHELVN</sequence>
<geneLocation type="chloroplast"/>
<gene>
    <name evidence="1" type="primary">ndhK</name>
</gene>
<keyword id="KW-0004">4Fe-4S</keyword>
<keyword id="KW-0150">Chloroplast</keyword>
<keyword id="KW-0408">Iron</keyword>
<keyword id="KW-0411">Iron-sulfur</keyword>
<keyword id="KW-0472">Membrane</keyword>
<keyword id="KW-0479">Metal-binding</keyword>
<keyword id="KW-0520">NAD</keyword>
<keyword id="KW-0521">NADP</keyword>
<keyword id="KW-0934">Plastid</keyword>
<keyword id="KW-0618">Plastoquinone</keyword>
<keyword id="KW-0874">Quinone</keyword>
<keyword id="KW-0793">Thylakoid</keyword>
<keyword id="KW-1278">Translocase</keyword>
<keyword id="KW-0813">Transport</keyword>
<dbReference type="EC" id="7.1.1.-" evidence="1"/>
<dbReference type="EMBL" id="EU262889">
    <property type="protein sequence ID" value="ABW98859.1"/>
    <property type="molecule type" value="Genomic_DNA"/>
</dbReference>
<dbReference type="RefSeq" id="YP_001687354.1">
    <property type="nucleotide sequence ID" value="NC_010361.1"/>
</dbReference>
<dbReference type="SMR" id="B0Z4U7"/>
<dbReference type="GeneID" id="5952015"/>
<dbReference type="GO" id="GO:0009535">
    <property type="term" value="C:chloroplast thylakoid membrane"/>
    <property type="evidence" value="ECO:0007669"/>
    <property type="project" value="UniProtKB-SubCell"/>
</dbReference>
<dbReference type="GO" id="GO:0045271">
    <property type="term" value="C:respiratory chain complex I"/>
    <property type="evidence" value="ECO:0007669"/>
    <property type="project" value="TreeGrafter"/>
</dbReference>
<dbReference type="GO" id="GO:0051539">
    <property type="term" value="F:4 iron, 4 sulfur cluster binding"/>
    <property type="evidence" value="ECO:0007669"/>
    <property type="project" value="UniProtKB-KW"/>
</dbReference>
<dbReference type="GO" id="GO:0005506">
    <property type="term" value="F:iron ion binding"/>
    <property type="evidence" value="ECO:0007669"/>
    <property type="project" value="UniProtKB-UniRule"/>
</dbReference>
<dbReference type="GO" id="GO:0008137">
    <property type="term" value="F:NADH dehydrogenase (ubiquinone) activity"/>
    <property type="evidence" value="ECO:0007669"/>
    <property type="project" value="InterPro"/>
</dbReference>
<dbReference type="GO" id="GO:0048038">
    <property type="term" value="F:quinone binding"/>
    <property type="evidence" value="ECO:0007669"/>
    <property type="project" value="UniProtKB-KW"/>
</dbReference>
<dbReference type="GO" id="GO:0009060">
    <property type="term" value="P:aerobic respiration"/>
    <property type="evidence" value="ECO:0007669"/>
    <property type="project" value="TreeGrafter"/>
</dbReference>
<dbReference type="GO" id="GO:0015990">
    <property type="term" value="P:electron transport coupled proton transport"/>
    <property type="evidence" value="ECO:0007669"/>
    <property type="project" value="TreeGrafter"/>
</dbReference>
<dbReference type="GO" id="GO:0019684">
    <property type="term" value="P:photosynthesis, light reaction"/>
    <property type="evidence" value="ECO:0007669"/>
    <property type="project" value="UniProtKB-UniRule"/>
</dbReference>
<dbReference type="FunFam" id="3.40.50.12280:FF:000003">
    <property type="entry name" value="NAD(P)H-quinone oxidoreductase subunit K, chloroplastic"/>
    <property type="match status" value="1"/>
</dbReference>
<dbReference type="Gene3D" id="3.40.50.12280">
    <property type="match status" value="1"/>
</dbReference>
<dbReference type="HAMAP" id="MF_01356">
    <property type="entry name" value="NDH1_NuoB"/>
    <property type="match status" value="1"/>
</dbReference>
<dbReference type="InterPro" id="IPR006137">
    <property type="entry name" value="NADH_UbQ_OxRdtase-like_20kDa"/>
</dbReference>
<dbReference type="InterPro" id="IPR006138">
    <property type="entry name" value="NADH_UQ_OxRdtase_20Kd_su"/>
</dbReference>
<dbReference type="NCBIfam" id="TIGR01957">
    <property type="entry name" value="nuoB_fam"/>
    <property type="match status" value="1"/>
</dbReference>
<dbReference type="NCBIfam" id="NF005012">
    <property type="entry name" value="PRK06411.1"/>
    <property type="match status" value="1"/>
</dbReference>
<dbReference type="PANTHER" id="PTHR11995">
    <property type="entry name" value="NADH DEHYDROGENASE"/>
    <property type="match status" value="1"/>
</dbReference>
<dbReference type="PANTHER" id="PTHR11995:SF14">
    <property type="entry name" value="NADH DEHYDROGENASE [UBIQUINONE] IRON-SULFUR PROTEIN 7, MITOCHONDRIAL"/>
    <property type="match status" value="1"/>
</dbReference>
<dbReference type="Pfam" id="PF01058">
    <property type="entry name" value="Oxidored_q6"/>
    <property type="match status" value="1"/>
</dbReference>
<dbReference type="SUPFAM" id="SSF56770">
    <property type="entry name" value="HydA/Nqo6-like"/>
    <property type="match status" value="1"/>
</dbReference>
<dbReference type="PROSITE" id="PS01150">
    <property type="entry name" value="COMPLEX1_20K"/>
    <property type="match status" value="1"/>
</dbReference>
<name>NDHK_OENBI</name>
<reference key="1">
    <citation type="journal article" date="2008" name="Nucleic Acids Res.">
        <title>The complete nucleotide sequences of the five genetically distinct plastid genomes of Oenothera, subsection Oenothera: I. Sequence evaluation and plastome evolution.</title>
        <authorList>
            <person name="Greiner S."/>
            <person name="Wang X."/>
            <person name="Rauwolf U."/>
            <person name="Silber M.V."/>
            <person name="Mayer K."/>
            <person name="Meurer J."/>
            <person name="Haberer G."/>
            <person name="Herrmann R.G."/>
        </authorList>
    </citation>
    <scope>NUCLEOTIDE SEQUENCE [LARGE SCALE GENOMIC DNA]</scope>
    <source>
        <strain>cv. Suaveolens Grado</strain>
    </source>
</reference>
<comment type="function">
    <text evidence="1">NDH shuttles electrons from NAD(P)H:plastoquinone, via FMN and iron-sulfur (Fe-S) centers, to quinones in the photosynthetic chain and possibly in a chloroplast respiratory chain. The immediate electron acceptor for the enzyme in this species is believed to be plastoquinone. Couples the redox reaction to proton translocation, and thus conserves the redox energy in a proton gradient.</text>
</comment>
<comment type="catalytic activity">
    <reaction evidence="1">
        <text>a plastoquinone + NADH + (n+1) H(+)(in) = a plastoquinol + NAD(+) + n H(+)(out)</text>
        <dbReference type="Rhea" id="RHEA:42608"/>
        <dbReference type="Rhea" id="RHEA-COMP:9561"/>
        <dbReference type="Rhea" id="RHEA-COMP:9562"/>
        <dbReference type="ChEBI" id="CHEBI:15378"/>
        <dbReference type="ChEBI" id="CHEBI:17757"/>
        <dbReference type="ChEBI" id="CHEBI:57540"/>
        <dbReference type="ChEBI" id="CHEBI:57945"/>
        <dbReference type="ChEBI" id="CHEBI:62192"/>
    </reaction>
</comment>
<comment type="catalytic activity">
    <reaction evidence="1">
        <text>a plastoquinone + NADPH + (n+1) H(+)(in) = a plastoquinol + NADP(+) + n H(+)(out)</text>
        <dbReference type="Rhea" id="RHEA:42612"/>
        <dbReference type="Rhea" id="RHEA-COMP:9561"/>
        <dbReference type="Rhea" id="RHEA-COMP:9562"/>
        <dbReference type="ChEBI" id="CHEBI:15378"/>
        <dbReference type="ChEBI" id="CHEBI:17757"/>
        <dbReference type="ChEBI" id="CHEBI:57783"/>
        <dbReference type="ChEBI" id="CHEBI:58349"/>
        <dbReference type="ChEBI" id="CHEBI:62192"/>
    </reaction>
</comment>
<comment type="cofactor">
    <cofactor evidence="1">
        <name>[4Fe-4S] cluster</name>
        <dbReference type="ChEBI" id="CHEBI:49883"/>
    </cofactor>
    <text evidence="1">Binds 1 [4Fe-4S] cluster.</text>
</comment>
<comment type="subunit">
    <text evidence="1">NDH is composed of at least 16 different subunits, 5 of which are encoded in the nucleus.</text>
</comment>
<comment type="subcellular location">
    <subcellularLocation>
        <location evidence="1">Plastid</location>
        <location evidence="1">Chloroplast thylakoid membrane</location>
        <topology evidence="1">Peripheral membrane protein</topology>
        <orientation evidence="1">Stromal side</orientation>
    </subcellularLocation>
</comment>
<comment type="similarity">
    <text evidence="1">Belongs to the complex I 20 kDa subunit family.</text>
</comment>
<organism>
    <name type="scientific">Oenothera biennis</name>
    <name type="common">German evening primrose</name>
    <name type="synonym">Onagra biennis</name>
    <dbReference type="NCBI Taxonomy" id="3942"/>
    <lineage>
        <taxon>Eukaryota</taxon>
        <taxon>Viridiplantae</taxon>
        <taxon>Streptophyta</taxon>
        <taxon>Embryophyta</taxon>
        <taxon>Tracheophyta</taxon>
        <taxon>Spermatophyta</taxon>
        <taxon>Magnoliopsida</taxon>
        <taxon>eudicotyledons</taxon>
        <taxon>Gunneridae</taxon>
        <taxon>Pentapetalae</taxon>
        <taxon>rosids</taxon>
        <taxon>malvids</taxon>
        <taxon>Myrtales</taxon>
        <taxon>Onagraceae</taxon>
        <taxon>Onagroideae</taxon>
        <taxon>Onagreae</taxon>
        <taxon>Oenothera</taxon>
    </lineage>
</organism>
<evidence type="ECO:0000255" key="1">
    <source>
        <dbReference type="HAMAP-Rule" id="MF_01356"/>
    </source>
</evidence>
<proteinExistence type="inferred from homology"/>
<accession>B0Z4U7</accession>
<protein>
    <recommendedName>
        <fullName evidence="1">NAD(P)H-quinone oxidoreductase subunit K, chloroplastic</fullName>
        <ecNumber evidence="1">7.1.1.-</ecNumber>
    </recommendedName>
    <alternativeName>
        <fullName evidence="1">NAD(P)H dehydrogenase subunit K</fullName>
    </alternativeName>
    <alternativeName>
        <fullName evidence="1">NADH-plastoquinone oxidoreductase subunit K</fullName>
    </alternativeName>
</protein>
<feature type="chain" id="PRO_0000358568" description="NAD(P)H-quinone oxidoreductase subunit K, chloroplastic">
    <location>
        <begin position="1"/>
        <end position="225"/>
    </location>
</feature>
<feature type="binding site" evidence="1">
    <location>
        <position position="43"/>
    </location>
    <ligand>
        <name>[4Fe-4S] cluster</name>
        <dbReference type="ChEBI" id="CHEBI:49883"/>
    </ligand>
</feature>
<feature type="binding site" evidence="1">
    <location>
        <position position="44"/>
    </location>
    <ligand>
        <name>[4Fe-4S] cluster</name>
        <dbReference type="ChEBI" id="CHEBI:49883"/>
    </ligand>
</feature>
<feature type="binding site" evidence="1">
    <location>
        <position position="108"/>
    </location>
    <ligand>
        <name>[4Fe-4S] cluster</name>
        <dbReference type="ChEBI" id="CHEBI:49883"/>
    </ligand>
</feature>
<feature type="binding site" evidence="1">
    <location>
        <position position="139"/>
    </location>
    <ligand>
        <name>[4Fe-4S] cluster</name>
        <dbReference type="ChEBI" id="CHEBI:49883"/>
    </ligand>
</feature>